<proteinExistence type="evidence at protein level"/>
<sequence>MVATVTDEQSAARELVRGWARTAASGAAATAAVRDMEYGFEEGNADAWRPVFAGLAGLGLFGVAVPEDCGGAGGSIEDLCAMVDEAARALVPGPVATTAVATLVVSDPKLRSALASGERFAGVAIDGGVQVDPKTSTASGTVGRVLGGAPGGVVLLPADGNWLLVDTACDEVVVEPLRATDFSLPLARMVLTSAPVTVLEVSGERVEDLAATVLAAEAAGVARWTLDTAVAYAKVREQFGKPIGSFQAVKHLCAQMLCRAEQADVAAADAARAAADSDGTQLSIAAAVAASIGIDAAKANAKDCIQVLGGIGCTWEHDAHLYLRRAHGIGGFLGGSGRWLRRVTALTQAGVRRRLGVDLAEVAGLRPEIAAAVAEVAALPEEKRQVALADTGLLAPHWPAPYGRGASPAEQLLIDQELAAAKVERPDLVIGWWAAPTILEHGTPEQIERFVPATMRGEFLWCQLFSEPGAGSDLASLRTKAVRADGGWLLTGQKVWTSAAHKARWGVCLARTDPDAPKHKGITYFLVDMTTPGIEIRPLREITGDSLFNEVFLDNVFVPDEMVVGAVNDGWRLARTTLANERVAMATGTALGNPMEELLKVLGDMELDVAQQDRLGRLILLAQAGALLDRRIAELAVGGQDPGAQSSVRKLIGVRYRQALAEYLMEVSDGGGLVENRAVYDFLNTRCLTIAGGTEQILLTVAAERLLGLPR</sequence>
<keyword id="KW-0153">Cholesterol metabolism</keyword>
<keyword id="KW-0274">FAD</keyword>
<keyword id="KW-0285">Flavoprotein</keyword>
<keyword id="KW-0442">Lipid degradation</keyword>
<keyword id="KW-0443">Lipid metabolism</keyword>
<keyword id="KW-0560">Oxidoreductase</keyword>
<keyword id="KW-1185">Reference proteome</keyword>
<keyword id="KW-0753">Steroid metabolism</keyword>
<keyword id="KW-1207">Sterol metabolism</keyword>
<keyword id="KW-0843">Virulence</keyword>
<dbReference type="EC" id="1.3.99.-" evidence="2 3"/>
<dbReference type="EMBL" id="AL123456">
    <property type="protein sequence ID" value="CCP46396.1"/>
    <property type="molecule type" value="Genomic_DNA"/>
</dbReference>
<dbReference type="RefSeq" id="NP_218090.1">
    <property type="nucleotide sequence ID" value="NC_000962.3"/>
</dbReference>
<dbReference type="RefSeq" id="WP_003419394.1">
    <property type="nucleotide sequence ID" value="NZ_NVQJ01000014.1"/>
</dbReference>
<dbReference type="SMR" id="P96855"/>
<dbReference type="FunCoup" id="P96855">
    <property type="interactions" value="2"/>
</dbReference>
<dbReference type="STRING" id="83332.Rv3573c"/>
<dbReference type="SwissLipids" id="SLP:000001235"/>
<dbReference type="PaxDb" id="83332-Rv3573c"/>
<dbReference type="DNASU" id="887843"/>
<dbReference type="GeneID" id="887843"/>
<dbReference type="KEGG" id="mtu:Rv3573c"/>
<dbReference type="KEGG" id="mtv:RVBD_3573c"/>
<dbReference type="PATRIC" id="fig|83332.111.peg.3980"/>
<dbReference type="TubercuList" id="Rv3573c"/>
<dbReference type="eggNOG" id="COG1960">
    <property type="taxonomic scope" value="Bacteria"/>
</dbReference>
<dbReference type="HOGENOM" id="CLU_018204_9_3_11"/>
<dbReference type="InParanoid" id="P96855"/>
<dbReference type="OrthoDB" id="2431337at2"/>
<dbReference type="PhylomeDB" id="P96855"/>
<dbReference type="BioCyc" id="MetaCyc:G185E-7851-MONOMER"/>
<dbReference type="UniPathway" id="UPA01058"/>
<dbReference type="Proteomes" id="UP000001584">
    <property type="component" value="Chromosome"/>
</dbReference>
<dbReference type="GO" id="GO:0005886">
    <property type="term" value="C:plasma membrane"/>
    <property type="evidence" value="ECO:0007005"/>
    <property type="project" value="MTBBASE"/>
</dbReference>
<dbReference type="GO" id="GO:0050660">
    <property type="term" value="F:flavin adenine dinucleotide binding"/>
    <property type="evidence" value="ECO:0007669"/>
    <property type="project" value="InterPro"/>
</dbReference>
<dbReference type="GO" id="GO:0016627">
    <property type="term" value="F:oxidoreductase activity, acting on the CH-CH group of donors"/>
    <property type="evidence" value="ECO:0007669"/>
    <property type="project" value="InterPro"/>
</dbReference>
<dbReference type="GO" id="GO:0006707">
    <property type="term" value="P:cholesterol catabolic process"/>
    <property type="evidence" value="ECO:0007669"/>
    <property type="project" value="UniProtKB-UniPathway"/>
</dbReference>
<dbReference type="FunFam" id="1.20.140.10:FF:000028">
    <property type="entry name" value="Acyl-CoA dehydrogenase FadE34"/>
    <property type="match status" value="1"/>
</dbReference>
<dbReference type="FunFam" id="1.20.140.10:FF:000051">
    <property type="entry name" value="Acyl-CoA dehydrogenase FadE34"/>
    <property type="match status" value="1"/>
</dbReference>
<dbReference type="FunFam" id="2.40.110.10:FF:000011">
    <property type="entry name" value="Acyl-CoA dehydrogenase FadE34"/>
    <property type="match status" value="1"/>
</dbReference>
<dbReference type="Gene3D" id="1.10.540.10">
    <property type="entry name" value="Acyl-CoA dehydrogenase/oxidase, N-terminal domain"/>
    <property type="match status" value="2"/>
</dbReference>
<dbReference type="Gene3D" id="2.40.110.10">
    <property type="entry name" value="Butyryl-CoA Dehydrogenase, subunit A, domain 2"/>
    <property type="match status" value="1"/>
</dbReference>
<dbReference type="Gene3D" id="1.20.140.10">
    <property type="entry name" value="Butyryl-CoA Dehydrogenase, subunit A, domain 3"/>
    <property type="match status" value="2"/>
</dbReference>
<dbReference type="InterPro" id="IPR006091">
    <property type="entry name" value="Acyl-CoA_Oxase/DH_mid-dom"/>
</dbReference>
<dbReference type="InterPro" id="IPR046373">
    <property type="entry name" value="Acyl-CoA_Oxase/DH_mid-dom_sf"/>
</dbReference>
<dbReference type="InterPro" id="IPR036250">
    <property type="entry name" value="AcylCo_DH-like_C"/>
</dbReference>
<dbReference type="InterPro" id="IPR009075">
    <property type="entry name" value="AcylCo_DH/oxidase_C"/>
</dbReference>
<dbReference type="InterPro" id="IPR013786">
    <property type="entry name" value="AcylCoA_DH/ox_N"/>
</dbReference>
<dbReference type="InterPro" id="IPR037069">
    <property type="entry name" value="AcylCoA_DH/ox_N_sf"/>
</dbReference>
<dbReference type="InterPro" id="IPR009100">
    <property type="entry name" value="AcylCoA_DH/oxidase_NM_dom_sf"/>
</dbReference>
<dbReference type="InterPro" id="IPR052161">
    <property type="entry name" value="Mycobact_Acyl-CoA_DH"/>
</dbReference>
<dbReference type="PANTHER" id="PTHR43292">
    <property type="entry name" value="ACYL-COA DEHYDROGENASE"/>
    <property type="match status" value="1"/>
</dbReference>
<dbReference type="PANTHER" id="PTHR43292:SF4">
    <property type="entry name" value="ACYL-COA DEHYDROGENASE FADE34"/>
    <property type="match status" value="1"/>
</dbReference>
<dbReference type="Pfam" id="PF00441">
    <property type="entry name" value="Acyl-CoA_dh_1"/>
    <property type="match status" value="2"/>
</dbReference>
<dbReference type="Pfam" id="PF02770">
    <property type="entry name" value="Acyl-CoA_dh_M"/>
    <property type="match status" value="1"/>
</dbReference>
<dbReference type="Pfam" id="PF02771">
    <property type="entry name" value="Acyl-CoA_dh_N"/>
    <property type="match status" value="2"/>
</dbReference>
<dbReference type="SUPFAM" id="SSF47203">
    <property type="entry name" value="Acyl-CoA dehydrogenase C-terminal domain-like"/>
    <property type="match status" value="2"/>
</dbReference>
<dbReference type="SUPFAM" id="SSF56645">
    <property type="entry name" value="Acyl-CoA dehydrogenase NM domain-like"/>
    <property type="match status" value="2"/>
</dbReference>
<evidence type="ECO:0000269" key="1">
    <source>
    </source>
</evidence>
<evidence type="ECO:0000269" key="2">
    <source>
    </source>
</evidence>
<evidence type="ECO:0000269" key="3">
    <source>
    </source>
</evidence>
<evidence type="ECO:0000303" key="4">
    <source>
    </source>
</evidence>
<evidence type="ECO:0000305" key="5"/>
<evidence type="ECO:0000305" key="6">
    <source>
    </source>
</evidence>
<gene>
    <name type="primary">fadE34</name>
    <name evidence="4" type="synonym">chsE3</name>
    <name type="ordered locus">Rv3573c</name>
</gene>
<comment type="function">
    <text evidence="2 3">Involved in the second cycle of side chain dehydrogenation in the beta-oxidation of cholesterol catabolism. It contributes partly to the virulence by increasing the efficiency of beta-oxidation (PubMed:26161441). Catalyzes the dehydrogenation of the five-carbon steroid side chain of 3-oxo-chol-4-en-24-oyl-CoA (3-OCO-CoA) to yield 3-oxochol-4,22-dien-24-oyl-CoA (PubMed:26161441). Can also use 3beta-hydroxy-chol-5-ene-24-oyl-CoA, and shows weak activity with cholyl-CoA and deoxycholyl-CoA (PubMed:25645564).</text>
</comment>
<comment type="catalytic activity">
    <reaction evidence="3">
        <text>3-oxochol-4-en-24-oyl-CoA + A = (22E)-3-oxochola-4,22-dien-24-oyl-CoA + AH2</text>
        <dbReference type="Rhea" id="RHEA:46684"/>
        <dbReference type="ChEBI" id="CHEBI:13193"/>
        <dbReference type="ChEBI" id="CHEBI:17499"/>
        <dbReference type="ChEBI" id="CHEBI:86412"/>
        <dbReference type="ChEBI" id="CHEBI:136759"/>
    </reaction>
    <physiologicalReaction direction="left-to-right" evidence="3">
        <dbReference type="Rhea" id="RHEA:46685"/>
    </physiologicalReaction>
</comment>
<comment type="catalytic activity">
    <reaction evidence="2">
        <text>3beta-hydroxy-chol-5-ene-24-oyl-CoA + A = 3beta-hydroxy-chol-5,22-dien-24-oyl-CoA + AH2</text>
        <dbReference type="Rhea" id="RHEA:46320"/>
        <dbReference type="ChEBI" id="CHEBI:13193"/>
        <dbReference type="ChEBI" id="CHEBI:17499"/>
        <dbReference type="ChEBI" id="CHEBI:86018"/>
        <dbReference type="ChEBI" id="CHEBI:86037"/>
    </reaction>
    <physiologicalReaction direction="left-to-right" evidence="2">
        <dbReference type="Rhea" id="RHEA:46321"/>
    </physiologicalReaction>
</comment>
<comment type="cofactor">
    <cofactor evidence="2 3">
        <name>FAD</name>
        <dbReference type="ChEBI" id="CHEBI:57692"/>
    </cofactor>
    <text evidence="3">Binds 2 FAD per dimer.</text>
</comment>
<comment type="biophysicochemical properties">
    <kinetics>
        <KM evidence="3">28 uM for 3-OCO-CoA (at pH 8.5 and 25 degrees Celsius)</KM>
        <KM evidence="2">2.5 uM for 3beta-hydroxy-chol-5-ene-24-oyl-CoA</KM>
        <KM evidence="2">47 uM for cholyl-CoA</KM>
        <KM evidence="2">27 uM for deoxycholyl-CoA</KM>
        <text evidence="2 3">kcat is 5 sec(-1) for 3-OCO-CoA as substrate (at pH 8.5 and 25 degrees Celsius) (PubMed:26161441). kcat is 3.7 sec(-1) with 3beta-hydroxy-chol-5-ene-24-oyl-CoA as substrate. kcat is 0.22 sec(-1) with cholyl-CoA as substrate. kcat is 0.44 sec(-1) with deoxycholyl-CoA as substrate (PubMed:25645564).</text>
    </kinetics>
</comment>
<comment type="pathway">
    <text evidence="6">Steroid metabolism; cholesterol degradation.</text>
</comment>
<comment type="subunit">
    <text evidence="2 3">Homodimer.</text>
</comment>
<comment type="induction">
    <text evidence="1">Induced by cholesterol and repressed by KstR.</text>
</comment>
<comment type="domain">
    <text evidence="2">Contains two ACAD domains separated by a short linker. The two domains interact to form a single active site.</text>
</comment>
<comment type="similarity">
    <text evidence="5">Belongs to the acyl-CoA dehydrogenase family.</text>
</comment>
<feature type="chain" id="PRO_0000438519" description="Acyl-CoA dehydrogenase FadE34">
    <location>
        <begin position="1"/>
        <end position="711"/>
    </location>
</feature>
<feature type="mutagenesis site" description="Displays less than 2% activity with cholyl-CoA as substrate. Cannot bind FAD." evidence="2">
    <original>R</original>
    <variation>A</variation>
    <location>
        <position position="236"/>
    </location>
</feature>
<feature type="mutagenesis site" description="Displays less than 1% activity with cholyl-CoA as substrate. Still binds FAD." evidence="2">
    <original>E</original>
    <variation>Q</variation>
    <location>
        <position position="581"/>
    </location>
</feature>
<name>CHSE3_MYCTU</name>
<accession>P96855</accession>
<accession>F2GJR9</accession>
<accession>I6YCG5</accession>
<reference key="1">
    <citation type="journal article" date="1998" name="Nature">
        <title>Deciphering the biology of Mycobacterium tuberculosis from the complete genome sequence.</title>
        <authorList>
            <person name="Cole S.T."/>
            <person name="Brosch R."/>
            <person name="Parkhill J."/>
            <person name="Garnier T."/>
            <person name="Churcher C.M."/>
            <person name="Harris D.E."/>
            <person name="Gordon S.V."/>
            <person name="Eiglmeier K."/>
            <person name="Gas S."/>
            <person name="Barry C.E. III"/>
            <person name="Tekaia F."/>
            <person name="Badcock K."/>
            <person name="Basham D."/>
            <person name="Brown D."/>
            <person name="Chillingworth T."/>
            <person name="Connor R."/>
            <person name="Davies R.M."/>
            <person name="Devlin K."/>
            <person name="Feltwell T."/>
            <person name="Gentles S."/>
            <person name="Hamlin N."/>
            <person name="Holroyd S."/>
            <person name="Hornsby T."/>
            <person name="Jagels K."/>
            <person name="Krogh A."/>
            <person name="McLean J."/>
            <person name="Moule S."/>
            <person name="Murphy L.D."/>
            <person name="Oliver S."/>
            <person name="Osborne J."/>
            <person name="Quail M.A."/>
            <person name="Rajandream M.A."/>
            <person name="Rogers J."/>
            <person name="Rutter S."/>
            <person name="Seeger K."/>
            <person name="Skelton S."/>
            <person name="Squares S."/>
            <person name="Squares R."/>
            <person name="Sulston J.E."/>
            <person name="Taylor K."/>
            <person name="Whitehead S."/>
            <person name="Barrell B.G."/>
        </authorList>
    </citation>
    <scope>NUCLEOTIDE SEQUENCE [LARGE SCALE GENOMIC DNA]</scope>
    <source>
        <strain>ATCC 25618 / H37Rv</strain>
    </source>
</reference>
<reference key="2">
    <citation type="journal article" date="2007" name="Mol. Microbiol.">
        <title>A highly conserved transcriptional repressor controls a large regulon involved in lipid degradation in Mycobacterium smegmatis and Mycobacterium tuberculosis.</title>
        <authorList>
            <person name="Kendall S.L."/>
            <person name="Withers M."/>
            <person name="Soffair C.N."/>
            <person name="Moreland N.J."/>
            <person name="Gurcha S."/>
            <person name="Sidders B."/>
            <person name="Frita R."/>
            <person name="Ten Bokum A."/>
            <person name="Besra G.S."/>
            <person name="Lott J.S."/>
            <person name="Stoker N.G."/>
        </authorList>
    </citation>
    <scope>INDUCTION</scope>
    <source>
        <strain>ATCC 25618 / H37Rv</strain>
    </source>
</reference>
<reference key="3">
    <citation type="journal article" date="2011" name="Mol. Cell. Proteomics">
        <title>Proteogenomic analysis of Mycobacterium tuberculosis by high resolution mass spectrometry.</title>
        <authorList>
            <person name="Kelkar D.S."/>
            <person name="Kumar D."/>
            <person name="Kumar P."/>
            <person name="Balakrishnan L."/>
            <person name="Muthusamy B."/>
            <person name="Yadav A.K."/>
            <person name="Shrivastava P."/>
            <person name="Marimuthu A."/>
            <person name="Anand S."/>
            <person name="Sundaram H."/>
            <person name="Kingsbury R."/>
            <person name="Harsha H.C."/>
            <person name="Nair B."/>
            <person name="Prasad T.S."/>
            <person name="Chauhan D.S."/>
            <person name="Katoch K."/>
            <person name="Katoch V.M."/>
            <person name="Kumar P."/>
            <person name="Chaerkady R."/>
            <person name="Ramachandran S."/>
            <person name="Dash D."/>
            <person name="Pandey A."/>
        </authorList>
    </citation>
    <scope>IDENTIFICATION BY MASS SPECTROMETRY [LARGE SCALE ANALYSIS]</scope>
    <source>
        <strain>ATCC 25618 / H37Rv</strain>
    </source>
</reference>
<reference key="4">
    <citation type="journal article" date="2015" name="J. Bacteriol.">
        <title>Characterization of novel acyl coenzyme A dehydrogenases involved in bacterial steroid degradation.</title>
        <authorList>
            <person name="Ruprecht A."/>
            <person name="Maddox J."/>
            <person name="Stirling A.J."/>
            <person name="Visaggio N."/>
            <person name="Seah S.Y."/>
        </authorList>
    </citation>
    <scope>FUNCTION</scope>
    <scope>CATALYTIC ACTIVITY</scope>
    <scope>COFACTOR</scope>
    <scope>BIOPHYSICOCHEMICAL PROPERTIES</scope>
    <scope>SUBUNIT</scope>
    <scope>DOMAIN</scope>
    <scope>MUTAGENESIS OF ARG-236 AND GLU-581</scope>
    <source>
        <strain>H37Rv</strain>
    </source>
</reference>
<reference key="5">
    <citation type="journal article" date="2015" name="ACS Infect. Dis.">
        <title>Unraveling cholesterol catabolism in Mycobacterium tuberculosis: ChsE4-ChsE5 alpha2beta2 acyl-CoA dehydrogenase initiates beta-oxidation of 3-oxo-cholest-4-en-26-oyl CoA.</title>
        <authorList>
            <person name="Yang M."/>
            <person name="Lu R."/>
            <person name="Guja K.E."/>
            <person name="Wipperman M.F."/>
            <person name="St Clair J.R."/>
            <person name="Bonds A.C."/>
            <person name="Garcia-Diaz M."/>
            <person name="Sampson N.S."/>
        </authorList>
    </citation>
    <scope>FUNCTION</scope>
    <scope>CATALYTIC ACTIVITY</scope>
    <scope>BIOPHYSICOCHEMICAL PROPERTIES</scope>
    <scope>COFACTOR</scope>
    <scope>PATHWAY</scope>
    <scope>SUBUNIT</scope>
</reference>
<organism>
    <name type="scientific">Mycobacterium tuberculosis (strain ATCC 25618 / H37Rv)</name>
    <dbReference type="NCBI Taxonomy" id="83332"/>
    <lineage>
        <taxon>Bacteria</taxon>
        <taxon>Bacillati</taxon>
        <taxon>Actinomycetota</taxon>
        <taxon>Actinomycetes</taxon>
        <taxon>Mycobacteriales</taxon>
        <taxon>Mycobacteriaceae</taxon>
        <taxon>Mycobacterium</taxon>
        <taxon>Mycobacterium tuberculosis complex</taxon>
    </lineage>
</organism>
<protein>
    <recommendedName>
        <fullName evidence="4">Acyl-CoA dehydrogenase FadE34</fullName>
        <shortName evidence="4">ACAD</shortName>
        <ecNumber evidence="2 3">1.3.99.-</ecNumber>
    </recommendedName>
    <alternativeName>
        <fullName evidence="6">3-oxochol-4-en-24-oyl-CoA dehydrogenase</fullName>
    </alternativeName>
</protein>